<reference key="1">
    <citation type="journal article" date="2009" name="PLoS Biol.">
        <title>Lineage-specific biology revealed by a finished genome assembly of the mouse.</title>
        <authorList>
            <person name="Church D.M."/>
            <person name="Goodstadt L."/>
            <person name="Hillier L.W."/>
            <person name="Zody M.C."/>
            <person name="Goldstein S."/>
            <person name="She X."/>
            <person name="Bult C.J."/>
            <person name="Agarwala R."/>
            <person name="Cherry J.L."/>
            <person name="DiCuccio M."/>
            <person name="Hlavina W."/>
            <person name="Kapustin Y."/>
            <person name="Meric P."/>
            <person name="Maglott D."/>
            <person name="Birtle Z."/>
            <person name="Marques A.C."/>
            <person name="Graves T."/>
            <person name="Zhou S."/>
            <person name="Teague B."/>
            <person name="Potamousis K."/>
            <person name="Churas C."/>
            <person name="Place M."/>
            <person name="Herschleb J."/>
            <person name="Runnheim R."/>
            <person name="Forrest D."/>
            <person name="Amos-Landgraf J."/>
            <person name="Schwartz D.C."/>
            <person name="Cheng Z."/>
            <person name="Lindblad-Toh K."/>
            <person name="Eichler E.E."/>
            <person name="Ponting C.P."/>
        </authorList>
    </citation>
    <scope>NUCLEOTIDE SEQUENCE [LARGE SCALE GENOMIC DNA]</scope>
    <source>
        <strain>C57BL/6J</strain>
    </source>
</reference>
<reference evidence="4" key="2">
    <citation type="journal article" date="2024" name="Nat. Struct. Mol. Biol.">
        <title>SCAF1 drives the compositional diversity of mammalian respirasomes.</title>
        <authorList>
            <person name="Vercellino I."/>
            <person name="Sazanov L.A."/>
        </authorList>
    </citation>
    <scope>STRUCTURE BY ELECTRON MICROSCOPY (3.60 ANGSTROMS) IN COMPLEX WITH MITOCHONDRIAL RESPIRATORY SUPERCOMPLEX</scope>
    <scope>FUNCTION</scope>
    <scope>SUBCELLULAR LOCATION</scope>
    <scope>SUBUNIT</scope>
</reference>
<dbReference type="EMBL" id="AC121965">
    <property type="status" value="NOT_ANNOTATED_CDS"/>
    <property type="molecule type" value="Genomic_DNA"/>
</dbReference>
<dbReference type="RefSeq" id="NP_001365454.1">
    <property type="nucleotide sequence ID" value="NM_001378525.1"/>
</dbReference>
<dbReference type="RefSeq" id="NP_001365456.1">
    <property type="nucleotide sequence ID" value="NM_001378527.1"/>
</dbReference>
<dbReference type="PDB" id="6G2J">
    <property type="method" value="EM"/>
    <property type="resolution" value="3.30 A"/>
    <property type="chains" value="f=1-57"/>
</dbReference>
<dbReference type="PDB" id="6G72">
    <property type="method" value="EM"/>
    <property type="resolution" value="3.90 A"/>
    <property type="chains" value="f=1-57"/>
</dbReference>
<dbReference type="PDB" id="6ZR2">
    <property type="method" value="EM"/>
    <property type="resolution" value="3.10 A"/>
    <property type="chains" value="f=1-57"/>
</dbReference>
<dbReference type="PDB" id="6ZTQ">
    <property type="method" value="EM"/>
    <property type="resolution" value="3.00 A"/>
    <property type="chains" value="f=1-57"/>
</dbReference>
<dbReference type="PDB" id="7AK5">
    <property type="method" value="EM"/>
    <property type="resolution" value="3.17 A"/>
    <property type="chains" value="f=1-57"/>
</dbReference>
<dbReference type="PDB" id="7AK6">
    <property type="method" value="EM"/>
    <property type="resolution" value="3.82 A"/>
    <property type="chains" value="f=1-57"/>
</dbReference>
<dbReference type="PDB" id="7B93">
    <property type="method" value="EM"/>
    <property type="resolution" value="3.04 A"/>
    <property type="chains" value="f=1-57"/>
</dbReference>
<dbReference type="PDB" id="7PSA">
    <property type="method" value="EM"/>
    <property type="resolution" value="3.40 A"/>
    <property type="chains" value="f=1-57"/>
</dbReference>
<dbReference type="PDB" id="8C2S">
    <property type="method" value="EM"/>
    <property type="resolution" value="3.90 A"/>
    <property type="chains" value="f=1-57"/>
</dbReference>
<dbReference type="PDB" id="8CA3">
    <property type="method" value="EM"/>
    <property type="resolution" value="3.20 A"/>
    <property type="chains" value="f=1-57"/>
</dbReference>
<dbReference type="PDB" id="8CA5">
    <property type="method" value="EM"/>
    <property type="resolution" value="3.90 A"/>
    <property type="chains" value="f=1-57"/>
</dbReference>
<dbReference type="PDB" id="8IAO">
    <property type="method" value="EM"/>
    <property type="resolution" value="4.20 A"/>
    <property type="chains" value="f=1-57"/>
</dbReference>
<dbReference type="PDB" id="8IAQ">
    <property type="method" value="EM"/>
    <property type="resolution" value="3.40 A"/>
    <property type="chains" value="f=1-57"/>
</dbReference>
<dbReference type="PDB" id="8IB4">
    <property type="method" value="EM"/>
    <property type="resolution" value="4.30 A"/>
    <property type="chains" value="f=1-57"/>
</dbReference>
<dbReference type="PDB" id="8IB6">
    <property type="method" value="EM"/>
    <property type="resolution" value="3.30 A"/>
    <property type="chains" value="f=1-57"/>
</dbReference>
<dbReference type="PDB" id="8IB9">
    <property type="method" value="EM"/>
    <property type="resolution" value="4.30 A"/>
    <property type="chains" value="f=1-57"/>
</dbReference>
<dbReference type="PDB" id="8IBB">
    <property type="method" value="EM"/>
    <property type="resolution" value="3.30 A"/>
    <property type="chains" value="f=1-57"/>
</dbReference>
<dbReference type="PDB" id="8IBD">
    <property type="method" value="EM"/>
    <property type="resolution" value="4.20 A"/>
    <property type="chains" value="f=1-57"/>
</dbReference>
<dbReference type="PDB" id="8IBF">
    <property type="method" value="EM"/>
    <property type="resolution" value="3.30 A"/>
    <property type="chains" value="f=1-57"/>
</dbReference>
<dbReference type="PDB" id="8IC2">
    <property type="method" value="EM"/>
    <property type="resolution" value="6.30 A"/>
    <property type="chains" value="f=1-57"/>
</dbReference>
<dbReference type="PDB" id="8IC4">
    <property type="method" value="EM"/>
    <property type="resolution" value="3.20 A"/>
    <property type="chains" value="f=1-57"/>
</dbReference>
<dbReference type="PDB" id="8OLT">
    <property type="method" value="EM"/>
    <property type="resolution" value="2.84 A"/>
    <property type="chains" value="f=1-57"/>
</dbReference>
<dbReference type="PDB" id="8OM1">
    <property type="method" value="EM"/>
    <property type="resolution" value="2.39 A"/>
    <property type="chains" value="f=1-57"/>
</dbReference>
<dbReference type="PDB" id="8PW5">
    <property type="method" value="EM"/>
    <property type="resolution" value="3.60 A"/>
    <property type="chains" value="f1=1-57"/>
</dbReference>
<dbReference type="PDB" id="8PW6">
    <property type="method" value="EM"/>
    <property type="resolution" value="3.30 A"/>
    <property type="chains" value="f1=1-57"/>
</dbReference>
<dbReference type="PDB" id="8PW7">
    <property type="method" value="EM"/>
    <property type="resolution" value="3.50 A"/>
    <property type="chains" value="f1=1-57"/>
</dbReference>
<dbReference type="PDB" id="8RGP">
    <property type="method" value="EM"/>
    <property type="resolution" value="3.00 A"/>
    <property type="chains" value="f=1-57"/>
</dbReference>
<dbReference type="PDB" id="8RGQ">
    <property type="method" value="EM"/>
    <property type="resolution" value="3.00 A"/>
    <property type="chains" value="f=1-57"/>
</dbReference>
<dbReference type="PDB" id="8RGR">
    <property type="method" value="EM"/>
    <property type="resolution" value="2.90 A"/>
    <property type="chains" value="f=1-57"/>
</dbReference>
<dbReference type="PDB" id="8RGT">
    <property type="method" value="EM"/>
    <property type="resolution" value="3.10 A"/>
    <property type="chains" value="f=1-57"/>
</dbReference>
<dbReference type="PDB" id="8UCA">
    <property type="method" value="EM"/>
    <property type="resolution" value="3.70 A"/>
    <property type="chains" value="B1/b1=1-57"/>
</dbReference>
<dbReference type="PDBsum" id="6G2J"/>
<dbReference type="PDBsum" id="6G72"/>
<dbReference type="PDBsum" id="6ZR2"/>
<dbReference type="PDBsum" id="6ZTQ"/>
<dbReference type="PDBsum" id="7AK5"/>
<dbReference type="PDBsum" id="7AK6"/>
<dbReference type="PDBsum" id="7B93"/>
<dbReference type="PDBsum" id="7PSA"/>
<dbReference type="PDBsum" id="8C2S"/>
<dbReference type="PDBsum" id="8CA3"/>
<dbReference type="PDBsum" id="8CA5"/>
<dbReference type="PDBsum" id="8IAO"/>
<dbReference type="PDBsum" id="8IAQ"/>
<dbReference type="PDBsum" id="8IB4"/>
<dbReference type="PDBsum" id="8IB6"/>
<dbReference type="PDBsum" id="8IB9"/>
<dbReference type="PDBsum" id="8IBB"/>
<dbReference type="PDBsum" id="8IBD"/>
<dbReference type="PDBsum" id="8IBF"/>
<dbReference type="PDBsum" id="8IC2"/>
<dbReference type="PDBsum" id="8IC4"/>
<dbReference type="PDBsum" id="8OLT"/>
<dbReference type="PDBsum" id="8OM1"/>
<dbReference type="PDBsum" id="8PW5"/>
<dbReference type="PDBsum" id="8PW6"/>
<dbReference type="PDBsum" id="8PW7"/>
<dbReference type="PDBsum" id="8RGP"/>
<dbReference type="PDBsum" id="8RGQ"/>
<dbReference type="PDBsum" id="8RGR"/>
<dbReference type="PDBsum" id="8RGT"/>
<dbReference type="PDBsum" id="8UCA"/>
<dbReference type="EMDB" id="EMD-16398"/>
<dbReference type="EMDB" id="EMD-16516"/>
<dbReference type="EMDB" id="EMD-16518"/>
<dbReference type="EMDB" id="EMD-16962"/>
<dbReference type="EMDB" id="EMD-16965"/>
<dbReference type="EMDB" id="EMD-17989"/>
<dbReference type="EMDB" id="EMD-17990"/>
<dbReference type="EMDB" id="EMD-17991"/>
<dbReference type="EMDB" id="EMD-19145"/>
<dbReference type="EMDB" id="EMD-19146"/>
<dbReference type="EMDB" id="EMD-19147"/>
<dbReference type="EMDB" id="EMD-19148"/>
<dbReference type="EMDB" id="EMD-35313"/>
<dbReference type="EMDB" id="EMD-35315"/>
<dbReference type="EMDB" id="EMD-35331"/>
<dbReference type="EMDB" id="EMD-35333"/>
<dbReference type="EMDB" id="EMD-35336"/>
<dbReference type="EMDB" id="EMD-35338"/>
<dbReference type="EMDB" id="EMD-35340"/>
<dbReference type="EMDB" id="EMD-35342"/>
<dbReference type="EMDB" id="EMD-35352"/>
<dbReference type="EMDB" id="EMD-35354"/>
<dbReference type="EMDB" id="EMD-42122"/>
<dbReference type="EMDB" id="EMD-4356"/>
<dbReference type="SMR" id="P0DN34"/>
<dbReference type="ComplexPortal" id="CPX-266">
    <property type="entry name" value="Mitochondrial respiratory chain complex I"/>
</dbReference>
<dbReference type="FunCoup" id="P0DN34">
    <property type="interactions" value="242"/>
</dbReference>
<dbReference type="IntAct" id="P0DN34">
    <property type="interactions" value="1"/>
</dbReference>
<dbReference type="STRING" id="10090.ENSMUSP00000159138"/>
<dbReference type="GlyGen" id="P0DN34">
    <property type="glycosylation" value="1 site, 1 O-linked glycan (1 site)"/>
</dbReference>
<dbReference type="PhosphoSitePlus" id="P0DN34"/>
<dbReference type="SwissPalm" id="P0DN34"/>
<dbReference type="jPOST" id="P0DN34"/>
<dbReference type="ProteomicsDB" id="252940"/>
<dbReference type="Pumba" id="P0DN34"/>
<dbReference type="Antibodypedia" id="26722">
    <property type="antibodies" value="91 antibodies from 24 providers"/>
</dbReference>
<dbReference type="Ensembl" id="ENSMUST00000221191.2">
    <property type="protein sequence ID" value="ENSMUSP00000159028.2"/>
    <property type="gene ID" value="ENSMUSG00000113902.2"/>
</dbReference>
<dbReference type="Ensembl" id="ENSMUST00000221227.2">
    <property type="protein sequence ID" value="ENSMUSP00000158975.2"/>
    <property type="gene ID" value="ENSMUSG00000113902.2"/>
</dbReference>
<dbReference type="Ensembl" id="ENSMUST00000221422.2">
    <property type="protein sequence ID" value="ENSMUSP00000159138.2"/>
    <property type="gene ID" value="ENSMUSG00000113902.2"/>
</dbReference>
<dbReference type="GeneID" id="102631912"/>
<dbReference type="AGR" id="MGI:3780865"/>
<dbReference type="MGI" id="MGI:3780865">
    <property type="gene designation" value="Ndufb1"/>
</dbReference>
<dbReference type="VEuPathDB" id="HostDB:ENSMUSG00000113902"/>
<dbReference type="GeneTree" id="ENSGT00390000005052"/>
<dbReference type="InParanoid" id="P0DN34"/>
<dbReference type="OMA" id="AREHWVN"/>
<dbReference type="OrthoDB" id="9923602at2759"/>
<dbReference type="Reactome" id="R-MMU-611105">
    <property type="pathway name" value="Respiratory electron transport"/>
</dbReference>
<dbReference type="Reactome" id="R-MMU-6799198">
    <property type="pathway name" value="Complex I biogenesis"/>
</dbReference>
<dbReference type="PRO" id="PR:P0DN34"/>
<dbReference type="Proteomes" id="UP000000589">
    <property type="component" value="Chromosome 12"/>
</dbReference>
<dbReference type="RNAct" id="P0DN34">
    <property type="molecule type" value="protein"/>
</dbReference>
<dbReference type="Bgee" id="ENSMUSG00000113902">
    <property type="expression patterns" value="Expressed in right kidney and 141 other cell types or tissues"/>
</dbReference>
<dbReference type="GO" id="GO:0005743">
    <property type="term" value="C:mitochondrial inner membrane"/>
    <property type="evidence" value="ECO:0000314"/>
    <property type="project" value="UniProtKB"/>
</dbReference>
<dbReference type="GO" id="GO:0016607">
    <property type="term" value="C:nuclear speck"/>
    <property type="evidence" value="ECO:0007669"/>
    <property type="project" value="Ensembl"/>
</dbReference>
<dbReference type="GO" id="GO:0045271">
    <property type="term" value="C:respiratory chain complex I"/>
    <property type="evidence" value="ECO:0000314"/>
    <property type="project" value="UniProtKB"/>
</dbReference>
<dbReference type="GO" id="GO:0009060">
    <property type="term" value="P:aerobic respiration"/>
    <property type="evidence" value="ECO:0000303"/>
    <property type="project" value="ComplexPortal"/>
</dbReference>
<dbReference type="GO" id="GO:0042776">
    <property type="term" value="P:proton motive force-driven mitochondrial ATP synthesis"/>
    <property type="evidence" value="ECO:0000303"/>
    <property type="project" value="ComplexPortal"/>
</dbReference>
<dbReference type="InterPro" id="IPR012575">
    <property type="entry name" value="NDUB1"/>
</dbReference>
<dbReference type="PANTHER" id="PTHR15222">
    <property type="entry name" value="NADH DEHYDROGENASE [UBIQUINONE] 1 BETA SUBCOMPLEX SUBUNIT 1"/>
    <property type="match status" value="1"/>
</dbReference>
<dbReference type="PANTHER" id="PTHR15222:SF2">
    <property type="entry name" value="NADH DEHYDROGENASE [UBIQUINONE] 1 BETA SUBCOMPLEX SUBUNIT 1"/>
    <property type="match status" value="1"/>
</dbReference>
<dbReference type="Pfam" id="PF08040">
    <property type="entry name" value="NADH_oxidored"/>
    <property type="match status" value="1"/>
</dbReference>
<organism>
    <name type="scientific">Mus musculus</name>
    <name type="common">Mouse</name>
    <dbReference type="NCBI Taxonomy" id="10090"/>
    <lineage>
        <taxon>Eukaryota</taxon>
        <taxon>Metazoa</taxon>
        <taxon>Chordata</taxon>
        <taxon>Craniata</taxon>
        <taxon>Vertebrata</taxon>
        <taxon>Euteleostomi</taxon>
        <taxon>Mammalia</taxon>
        <taxon>Eutheria</taxon>
        <taxon>Euarchontoglires</taxon>
        <taxon>Glires</taxon>
        <taxon>Rodentia</taxon>
        <taxon>Myomorpha</taxon>
        <taxon>Muroidea</taxon>
        <taxon>Muridae</taxon>
        <taxon>Murinae</taxon>
        <taxon>Mus</taxon>
        <taxon>Mus</taxon>
    </lineage>
</organism>
<name>NDUB1_MOUSE</name>
<accession>P0DN34</accession>
<comment type="function">
    <text evidence="2">Accessory subunit of the mitochondrial membrane respiratory chain NADH dehydrogenase (Complex I) that is believed not to be involved in catalysis. Complex I functions in the transfer of electrons from NADH to the respiratory chain. The immediate electron acceptor for the enzyme is believed to be ubiquinone.</text>
</comment>
<comment type="subunit">
    <text evidence="2">Complex I is composed of 45 different subunits.</text>
</comment>
<comment type="subcellular location">
    <subcellularLocation>
        <location evidence="2">Mitochondrion inner membrane</location>
        <topology evidence="1">Single-pass membrane protein</topology>
        <orientation evidence="2">Matrix side</orientation>
    </subcellularLocation>
</comment>
<comment type="similarity">
    <text evidence="3">Belongs to the complex I NDUFB1 subunit family.</text>
</comment>
<protein>
    <recommendedName>
        <fullName>NADH dehydrogenase [ubiquinone] 1 beta subcomplex subunit 1</fullName>
    </recommendedName>
    <alternativeName>
        <fullName>Complex I-MNLL</fullName>
        <shortName>CI-MNLL</shortName>
    </alternativeName>
    <alternativeName>
        <fullName>NADH-ubiquinone oxidoreductase MNLL subunit</fullName>
    </alternativeName>
</protein>
<gene>
    <name type="primary">Ndufb1</name>
</gene>
<sequence>MTLFQLLREHWVHILVPAGFVFGCYLDRKDDEKLTAFRNKSMLFQRELRPNEEVTWK</sequence>
<keyword id="KW-0002">3D-structure</keyword>
<keyword id="KW-0249">Electron transport</keyword>
<keyword id="KW-0472">Membrane</keyword>
<keyword id="KW-0496">Mitochondrion</keyword>
<keyword id="KW-0999">Mitochondrion inner membrane</keyword>
<keyword id="KW-1185">Reference proteome</keyword>
<keyword id="KW-0679">Respiratory chain</keyword>
<keyword id="KW-0812">Transmembrane</keyword>
<keyword id="KW-1133">Transmembrane helix</keyword>
<keyword id="KW-0813">Transport</keyword>
<feature type="chain" id="PRO_0000434810" description="NADH dehydrogenase [ubiquinone] 1 beta subcomplex subunit 1">
    <location>
        <begin position="1"/>
        <end position="57"/>
    </location>
</feature>
<feature type="transmembrane region" description="Helical" evidence="1">
    <location>
        <begin position="10"/>
        <end position="26"/>
    </location>
</feature>
<feature type="helix" evidence="5">
    <location>
        <begin position="4"/>
        <end position="10"/>
    </location>
</feature>
<feature type="helix" evidence="5">
    <location>
        <begin position="11"/>
        <end position="14"/>
    </location>
</feature>
<feature type="helix" evidence="5">
    <location>
        <begin position="15"/>
        <end position="32"/>
    </location>
</feature>
<feature type="turn" evidence="5">
    <location>
        <begin position="36"/>
        <end position="40"/>
    </location>
</feature>
<feature type="turn" evidence="5">
    <location>
        <begin position="42"/>
        <end position="44"/>
    </location>
</feature>
<proteinExistence type="evidence at protein level"/>
<evidence type="ECO:0000255" key="1"/>
<evidence type="ECO:0000269" key="2">
    <source>
    </source>
</evidence>
<evidence type="ECO:0000305" key="3"/>
<evidence type="ECO:0007744" key="4">
    <source>
        <dbReference type="PDB" id="8PW5"/>
    </source>
</evidence>
<evidence type="ECO:0007829" key="5">
    <source>
        <dbReference type="PDB" id="8OM1"/>
    </source>
</evidence>